<proteinExistence type="inferred from homology"/>
<evidence type="ECO:0000255" key="1">
    <source>
        <dbReference type="HAMAP-Rule" id="MF_01954"/>
    </source>
</evidence>
<sequence length="101" mass="10882">MIPGELITDDGELELNAGRATVTVTVSNTGDRPVQVGSHYHFYEVNAALSFDREAARGFRLNIAAGTAVRFEPGQERTVELVALAGDRVVYGFNGKVMGKL</sequence>
<accession>B2JF66</accession>
<name>URE2_PARP8</name>
<reference key="1">
    <citation type="journal article" date="2014" name="Stand. Genomic Sci.">
        <title>Complete genome sequence of Burkholderia phymatum STM815(T), a broad host range and efficient nitrogen-fixing symbiont of Mimosa species.</title>
        <authorList>
            <person name="Moulin L."/>
            <person name="Klonowska A."/>
            <person name="Caroline B."/>
            <person name="Booth K."/>
            <person name="Vriezen J.A."/>
            <person name="Melkonian R."/>
            <person name="James E.K."/>
            <person name="Young J.P."/>
            <person name="Bena G."/>
            <person name="Hauser L."/>
            <person name="Land M."/>
            <person name="Kyrpides N."/>
            <person name="Bruce D."/>
            <person name="Chain P."/>
            <person name="Copeland A."/>
            <person name="Pitluck S."/>
            <person name="Woyke T."/>
            <person name="Lizotte-Waniewski M."/>
            <person name="Bristow J."/>
            <person name="Riley M."/>
        </authorList>
    </citation>
    <scope>NUCLEOTIDE SEQUENCE [LARGE SCALE GENOMIC DNA]</scope>
    <source>
        <strain>DSM 17167 / CIP 108236 / LMG 21445 / STM815</strain>
    </source>
</reference>
<protein>
    <recommendedName>
        <fullName evidence="1">Urease subunit beta</fullName>
        <ecNumber evidence="1">3.5.1.5</ecNumber>
    </recommendedName>
    <alternativeName>
        <fullName evidence="1">Urea amidohydrolase subunit beta</fullName>
    </alternativeName>
</protein>
<organism>
    <name type="scientific">Paraburkholderia phymatum (strain DSM 17167 / CIP 108236 / LMG 21445 / STM815)</name>
    <name type="common">Burkholderia phymatum</name>
    <dbReference type="NCBI Taxonomy" id="391038"/>
    <lineage>
        <taxon>Bacteria</taxon>
        <taxon>Pseudomonadati</taxon>
        <taxon>Pseudomonadota</taxon>
        <taxon>Betaproteobacteria</taxon>
        <taxon>Burkholderiales</taxon>
        <taxon>Burkholderiaceae</taxon>
        <taxon>Paraburkholderia</taxon>
    </lineage>
</organism>
<gene>
    <name evidence="1" type="primary">ureB</name>
    <name type="ordered locus">Bphy_2259</name>
</gene>
<dbReference type="EC" id="3.5.1.5" evidence="1"/>
<dbReference type="EMBL" id="CP001043">
    <property type="protein sequence ID" value="ACC71434.1"/>
    <property type="molecule type" value="Genomic_DNA"/>
</dbReference>
<dbReference type="RefSeq" id="WP_012401640.1">
    <property type="nucleotide sequence ID" value="NC_010622.1"/>
</dbReference>
<dbReference type="SMR" id="B2JF66"/>
<dbReference type="STRING" id="391038.Bphy_2259"/>
<dbReference type="KEGG" id="bph:Bphy_2259"/>
<dbReference type="eggNOG" id="COG0832">
    <property type="taxonomic scope" value="Bacteria"/>
</dbReference>
<dbReference type="HOGENOM" id="CLU_129707_1_1_4"/>
<dbReference type="OrthoDB" id="9797217at2"/>
<dbReference type="UniPathway" id="UPA00258">
    <property type="reaction ID" value="UER00370"/>
</dbReference>
<dbReference type="Proteomes" id="UP000001192">
    <property type="component" value="Chromosome 1"/>
</dbReference>
<dbReference type="GO" id="GO:0035550">
    <property type="term" value="C:urease complex"/>
    <property type="evidence" value="ECO:0007669"/>
    <property type="project" value="InterPro"/>
</dbReference>
<dbReference type="GO" id="GO:0009039">
    <property type="term" value="F:urease activity"/>
    <property type="evidence" value="ECO:0007669"/>
    <property type="project" value="UniProtKB-UniRule"/>
</dbReference>
<dbReference type="GO" id="GO:0043419">
    <property type="term" value="P:urea catabolic process"/>
    <property type="evidence" value="ECO:0007669"/>
    <property type="project" value="UniProtKB-UniRule"/>
</dbReference>
<dbReference type="CDD" id="cd00407">
    <property type="entry name" value="Urease_beta"/>
    <property type="match status" value="1"/>
</dbReference>
<dbReference type="FunFam" id="2.10.150.10:FF:000001">
    <property type="entry name" value="Urease subunit beta"/>
    <property type="match status" value="1"/>
</dbReference>
<dbReference type="Gene3D" id="2.10.150.10">
    <property type="entry name" value="Urease, beta subunit"/>
    <property type="match status" value="1"/>
</dbReference>
<dbReference type="HAMAP" id="MF_01954">
    <property type="entry name" value="Urease_beta"/>
    <property type="match status" value="1"/>
</dbReference>
<dbReference type="InterPro" id="IPR002019">
    <property type="entry name" value="Urease_beta-like"/>
</dbReference>
<dbReference type="InterPro" id="IPR036461">
    <property type="entry name" value="Urease_betasu_sf"/>
</dbReference>
<dbReference type="InterPro" id="IPR050069">
    <property type="entry name" value="Urease_subunit"/>
</dbReference>
<dbReference type="NCBIfam" id="NF009682">
    <property type="entry name" value="PRK13203.1"/>
    <property type="match status" value="1"/>
</dbReference>
<dbReference type="NCBIfam" id="TIGR00192">
    <property type="entry name" value="urease_beta"/>
    <property type="match status" value="1"/>
</dbReference>
<dbReference type="PANTHER" id="PTHR33569">
    <property type="entry name" value="UREASE"/>
    <property type="match status" value="1"/>
</dbReference>
<dbReference type="PANTHER" id="PTHR33569:SF1">
    <property type="entry name" value="UREASE"/>
    <property type="match status" value="1"/>
</dbReference>
<dbReference type="Pfam" id="PF00699">
    <property type="entry name" value="Urease_beta"/>
    <property type="match status" value="1"/>
</dbReference>
<dbReference type="SUPFAM" id="SSF51278">
    <property type="entry name" value="Urease, beta-subunit"/>
    <property type="match status" value="1"/>
</dbReference>
<feature type="chain" id="PRO_1000188917" description="Urease subunit beta">
    <location>
        <begin position="1"/>
        <end position="101"/>
    </location>
</feature>
<keyword id="KW-0963">Cytoplasm</keyword>
<keyword id="KW-0378">Hydrolase</keyword>
<keyword id="KW-1185">Reference proteome</keyword>
<comment type="catalytic activity">
    <reaction evidence="1">
        <text>urea + 2 H2O + H(+) = hydrogencarbonate + 2 NH4(+)</text>
        <dbReference type="Rhea" id="RHEA:20557"/>
        <dbReference type="ChEBI" id="CHEBI:15377"/>
        <dbReference type="ChEBI" id="CHEBI:15378"/>
        <dbReference type="ChEBI" id="CHEBI:16199"/>
        <dbReference type="ChEBI" id="CHEBI:17544"/>
        <dbReference type="ChEBI" id="CHEBI:28938"/>
        <dbReference type="EC" id="3.5.1.5"/>
    </reaction>
</comment>
<comment type="pathway">
    <text evidence="1">Nitrogen metabolism; urea degradation; CO(2) and NH(3) from urea (urease route): step 1/1.</text>
</comment>
<comment type="subunit">
    <text evidence="1">Heterotrimer of UreA (gamma), UreB (beta) and UreC (alpha) subunits. Three heterotrimers associate to form the active enzyme.</text>
</comment>
<comment type="subcellular location">
    <subcellularLocation>
        <location evidence="1">Cytoplasm</location>
    </subcellularLocation>
</comment>
<comment type="similarity">
    <text evidence="1">Belongs to the urease beta subunit family.</text>
</comment>